<name>Y100_ALIF1</name>
<protein>
    <recommendedName>
        <fullName evidence="1">UPF0761 membrane protein VF_0100</fullName>
    </recommendedName>
</protein>
<accession>Q5E8Q1</accession>
<organism>
    <name type="scientific">Aliivibrio fischeri (strain ATCC 700601 / ES114)</name>
    <name type="common">Vibrio fischeri</name>
    <dbReference type="NCBI Taxonomy" id="312309"/>
    <lineage>
        <taxon>Bacteria</taxon>
        <taxon>Pseudomonadati</taxon>
        <taxon>Pseudomonadota</taxon>
        <taxon>Gammaproteobacteria</taxon>
        <taxon>Vibrionales</taxon>
        <taxon>Vibrionaceae</taxon>
        <taxon>Aliivibrio</taxon>
    </lineage>
</organism>
<reference key="1">
    <citation type="journal article" date="2005" name="Proc. Natl. Acad. Sci. U.S.A.">
        <title>Complete genome sequence of Vibrio fischeri: a symbiotic bacterium with pathogenic congeners.</title>
        <authorList>
            <person name="Ruby E.G."/>
            <person name="Urbanowski M."/>
            <person name="Campbell J."/>
            <person name="Dunn A."/>
            <person name="Faini M."/>
            <person name="Gunsalus R."/>
            <person name="Lostroh P."/>
            <person name="Lupp C."/>
            <person name="McCann J."/>
            <person name="Millikan D."/>
            <person name="Schaefer A."/>
            <person name="Stabb E."/>
            <person name="Stevens A."/>
            <person name="Visick K."/>
            <person name="Whistler C."/>
            <person name="Greenberg E.P."/>
        </authorList>
    </citation>
    <scope>NUCLEOTIDE SEQUENCE [LARGE SCALE GENOMIC DNA]</scope>
    <source>
        <strain>ATCC 700601 / ES114</strain>
    </source>
</reference>
<sequence>MEDKIKHKLRIGWSYLLFLKQRVIHDRLTVSAGYMAYITLLSLVPLITVLLSVLSQFPVFSGAGETVQAFVIQNFVPAASDAVEASLKEFISNTGKMTAVGSGFLFVASVMLISSIDRSLNYIWRVKKKRRPMYSFSLYWMILTLGPLLVGASLAATSYVTSLKIMDDEIVSSFYRTLLGWLPIILSFSAFVGLYLLVPNKKVRVTHALIGAMSAGCLFEFSKVGFAQYITQFPSYQVIYGALAAVPILFVWVYLCWIIVLIGAEITASLGEFEGWLTGKVSVNILESDIKALTEQQGLIESDSTDPESK</sequence>
<evidence type="ECO:0000255" key="1">
    <source>
        <dbReference type="HAMAP-Rule" id="MF_00672"/>
    </source>
</evidence>
<feature type="chain" id="PRO_0000200999" description="UPF0761 membrane protein VF_0100">
    <location>
        <begin position="1"/>
        <end position="310"/>
    </location>
</feature>
<feature type="transmembrane region" description="Helical" evidence="1">
    <location>
        <begin position="34"/>
        <end position="54"/>
    </location>
</feature>
<feature type="transmembrane region" description="Helical" evidence="1">
    <location>
        <begin position="97"/>
        <end position="117"/>
    </location>
</feature>
<feature type="transmembrane region" description="Helical" evidence="1">
    <location>
        <begin position="136"/>
        <end position="156"/>
    </location>
</feature>
<feature type="transmembrane region" description="Helical" evidence="1">
    <location>
        <begin position="178"/>
        <end position="198"/>
    </location>
</feature>
<feature type="transmembrane region" description="Helical" evidence="1">
    <location>
        <begin position="207"/>
        <end position="227"/>
    </location>
</feature>
<feature type="transmembrane region" description="Helical" evidence="1">
    <location>
        <begin position="242"/>
        <end position="262"/>
    </location>
</feature>
<proteinExistence type="inferred from homology"/>
<gene>
    <name type="ordered locus">VF_0100</name>
</gene>
<keyword id="KW-0997">Cell inner membrane</keyword>
<keyword id="KW-1003">Cell membrane</keyword>
<keyword id="KW-0472">Membrane</keyword>
<keyword id="KW-1185">Reference proteome</keyword>
<keyword id="KW-0812">Transmembrane</keyword>
<keyword id="KW-1133">Transmembrane helix</keyword>
<comment type="subcellular location">
    <subcellularLocation>
        <location evidence="1">Cell inner membrane</location>
        <topology evidence="1">Multi-pass membrane protein</topology>
    </subcellularLocation>
</comment>
<comment type="similarity">
    <text evidence="1">Belongs to the UPF0761 family.</text>
</comment>
<dbReference type="EMBL" id="CP000020">
    <property type="protein sequence ID" value="AAW84595.1"/>
    <property type="molecule type" value="Genomic_DNA"/>
</dbReference>
<dbReference type="RefSeq" id="WP_011260969.1">
    <property type="nucleotide sequence ID" value="NC_006840.2"/>
</dbReference>
<dbReference type="RefSeq" id="YP_203483.1">
    <property type="nucleotide sequence ID" value="NC_006840.2"/>
</dbReference>
<dbReference type="STRING" id="312309.VF_0100"/>
<dbReference type="DNASU" id="3277804"/>
<dbReference type="EnsemblBacteria" id="AAW84595">
    <property type="protein sequence ID" value="AAW84595"/>
    <property type="gene ID" value="VF_0100"/>
</dbReference>
<dbReference type="GeneID" id="54162727"/>
<dbReference type="KEGG" id="vfi:VF_0100"/>
<dbReference type="PATRIC" id="fig|312309.11.peg.99"/>
<dbReference type="eggNOG" id="COG1295">
    <property type="taxonomic scope" value="Bacteria"/>
</dbReference>
<dbReference type="HOGENOM" id="CLU_032288_0_0_6"/>
<dbReference type="OrthoDB" id="9808671at2"/>
<dbReference type="Proteomes" id="UP000000537">
    <property type="component" value="Chromosome I"/>
</dbReference>
<dbReference type="GO" id="GO:0005886">
    <property type="term" value="C:plasma membrane"/>
    <property type="evidence" value="ECO:0007669"/>
    <property type="project" value="UniProtKB-SubCell"/>
</dbReference>
<dbReference type="HAMAP" id="MF_00672">
    <property type="entry name" value="UPF0761"/>
    <property type="match status" value="1"/>
</dbReference>
<dbReference type="InterPro" id="IPR023679">
    <property type="entry name" value="UPF0761_bac"/>
</dbReference>
<dbReference type="InterPro" id="IPR017039">
    <property type="entry name" value="Virul_fac_BrkB"/>
</dbReference>
<dbReference type="NCBIfam" id="NF002457">
    <property type="entry name" value="PRK01637.1"/>
    <property type="match status" value="1"/>
</dbReference>
<dbReference type="NCBIfam" id="TIGR00765">
    <property type="entry name" value="yihY_not_rbn"/>
    <property type="match status" value="1"/>
</dbReference>
<dbReference type="PANTHER" id="PTHR30213">
    <property type="entry name" value="INNER MEMBRANE PROTEIN YHJD"/>
    <property type="match status" value="1"/>
</dbReference>
<dbReference type="PANTHER" id="PTHR30213:SF0">
    <property type="entry name" value="UPF0761 MEMBRANE PROTEIN YIHY"/>
    <property type="match status" value="1"/>
</dbReference>
<dbReference type="Pfam" id="PF03631">
    <property type="entry name" value="Virul_fac_BrkB"/>
    <property type="match status" value="1"/>
</dbReference>
<dbReference type="PIRSF" id="PIRSF035875">
    <property type="entry name" value="RNase_BN"/>
    <property type="match status" value="1"/>
</dbReference>